<protein>
    <recommendedName>
        <fullName>Glucose-6-phosphate 1-dehydrogenase</fullName>
        <shortName>G6PD</shortName>
        <ecNumber evidence="2">1.1.1.49</ecNumber>
    </recommendedName>
</protein>
<comment type="function">
    <text evidence="2">Catalyzes the rate-limiting step of the oxidative pentose-phosphate pathway, which represents a route for the dissimilation of carbohydrates besides glycolysis. The main function of this enzyme is to provide reducing power (NADPH) and pentose phosphates for fatty acid and nucleic acid synthesis (By similarity).</text>
</comment>
<comment type="catalytic activity">
    <reaction evidence="2">
        <text>D-glucose 6-phosphate + NADP(+) = 6-phospho-D-glucono-1,5-lactone + NADPH + H(+)</text>
        <dbReference type="Rhea" id="RHEA:15841"/>
        <dbReference type="ChEBI" id="CHEBI:15378"/>
        <dbReference type="ChEBI" id="CHEBI:57783"/>
        <dbReference type="ChEBI" id="CHEBI:57955"/>
        <dbReference type="ChEBI" id="CHEBI:58349"/>
        <dbReference type="ChEBI" id="CHEBI:61548"/>
        <dbReference type="EC" id="1.1.1.49"/>
    </reaction>
</comment>
<comment type="pathway">
    <text evidence="3">Carbohydrate degradation; pentose phosphate pathway; D-ribulose 5-phosphate from D-glucose 6-phosphate (oxidative stage): step 1/3.</text>
</comment>
<comment type="similarity">
    <text evidence="3">Belongs to the glucose-6-phosphate dehydrogenase family.</text>
</comment>
<sequence length="497" mass="56574">MATQFDENTVITIFGASGDLSKKKTFPALFGLYREGYLNPTTKIIGYARSKLSNEDLREKVKPFLKKPNGAKDDAKVNEFLSMVSYHAGPYDSDEGYLELKKIIEEFEAEKKVDEPHRLFYLALPPSIFIDVCSKLKENLYTESGIQRVIVEKPFGHDLQSATELQEKLAPLFSEDELFRIDHYLGKEMVKNLLLMRFGNTFLNAAWNKENIQSVQVVFKEPFGTEGRGGYFDSIGIIRDVMQNHLLQVLTLLTMERPVSFDPESVRDEKVKVLKAFSPIDHDDILIGQYGRSVDGSKPSYLDDETVKEDSKCVTFAAIGFKIANERWDGVPIVMRAGKALNEGKVEIRIQFRRVASGMFTDIPNNELVIRIQPNEAIYLKCNAKTPGLANENQTTELDLTYSERYKNYWIPEAYESLIRDALLGDHSNFVRDDELDVSWKLFTPLLNYLEGPDGPQPKIYPYGCRSPDGLVEFLADHGYTFSKPGSYQWPVTTPKM</sequence>
<proteinExistence type="evidence at protein level"/>
<reference key="1">
    <citation type="submission" date="1993-02" db="EMBL/GenBank/DDBJ databases">
        <authorList>
            <person name="Wesolowski-Louvel M."/>
            <person name="Tanguy-Rougeau C."/>
            <person name="Fukuhara H."/>
        </authorList>
    </citation>
    <scope>NUCLEOTIDE SEQUENCE [GENOMIC DNA]</scope>
    <source>
        <strain>ATCC 76492 / CBS 2359/152 / CLIB 210</strain>
    </source>
</reference>
<reference key="2">
    <citation type="journal article" date="2004" name="Nature">
        <title>Genome evolution in yeasts.</title>
        <authorList>
            <person name="Dujon B."/>
            <person name="Sherman D."/>
            <person name="Fischer G."/>
            <person name="Durrens P."/>
            <person name="Casaregola S."/>
            <person name="Lafontaine I."/>
            <person name="de Montigny J."/>
            <person name="Marck C."/>
            <person name="Neuveglise C."/>
            <person name="Talla E."/>
            <person name="Goffard N."/>
            <person name="Frangeul L."/>
            <person name="Aigle M."/>
            <person name="Anthouard V."/>
            <person name="Babour A."/>
            <person name="Barbe V."/>
            <person name="Barnay S."/>
            <person name="Blanchin S."/>
            <person name="Beckerich J.-M."/>
            <person name="Beyne E."/>
            <person name="Bleykasten C."/>
            <person name="Boisrame A."/>
            <person name="Boyer J."/>
            <person name="Cattolico L."/>
            <person name="Confanioleri F."/>
            <person name="de Daruvar A."/>
            <person name="Despons L."/>
            <person name="Fabre E."/>
            <person name="Fairhead C."/>
            <person name="Ferry-Dumazet H."/>
            <person name="Groppi A."/>
            <person name="Hantraye F."/>
            <person name="Hennequin C."/>
            <person name="Jauniaux N."/>
            <person name="Joyet P."/>
            <person name="Kachouri R."/>
            <person name="Kerrest A."/>
            <person name="Koszul R."/>
            <person name="Lemaire M."/>
            <person name="Lesur I."/>
            <person name="Ma L."/>
            <person name="Muller H."/>
            <person name="Nicaud J.-M."/>
            <person name="Nikolski M."/>
            <person name="Oztas S."/>
            <person name="Ozier-Kalogeropoulos O."/>
            <person name="Pellenz S."/>
            <person name="Potier S."/>
            <person name="Richard G.-F."/>
            <person name="Straub M.-L."/>
            <person name="Suleau A."/>
            <person name="Swennen D."/>
            <person name="Tekaia F."/>
            <person name="Wesolowski-Louvel M."/>
            <person name="Westhof E."/>
            <person name="Wirth B."/>
            <person name="Zeniou-Meyer M."/>
            <person name="Zivanovic Y."/>
            <person name="Bolotin-Fukuhara M."/>
            <person name="Thierry A."/>
            <person name="Bouchier C."/>
            <person name="Caudron B."/>
            <person name="Scarpelli C."/>
            <person name="Gaillardin C."/>
            <person name="Weissenbach J."/>
            <person name="Wincker P."/>
            <person name="Souciet J.-L."/>
        </authorList>
    </citation>
    <scope>NUCLEOTIDE SEQUENCE [LARGE SCALE GENOMIC DNA]</scope>
    <source>
        <strain>ATCC 8585 / CBS 2359 / DSM 70799 / NBRC 1267 / NRRL Y-1140 / WM37</strain>
    </source>
</reference>
<organism>
    <name type="scientific">Kluyveromyces lactis (strain ATCC 8585 / CBS 2359 / DSM 70799 / NBRC 1267 / NRRL Y-1140 / WM37)</name>
    <name type="common">Yeast</name>
    <name type="synonym">Candida sphaerica</name>
    <dbReference type="NCBI Taxonomy" id="284590"/>
    <lineage>
        <taxon>Eukaryota</taxon>
        <taxon>Fungi</taxon>
        <taxon>Dikarya</taxon>
        <taxon>Ascomycota</taxon>
        <taxon>Saccharomycotina</taxon>
        <taxon>Saccharomycetes</taxon>
        <taxon>Saccharomycetales</taxon>
        <taxon>Saccharomycetaceae</taxon>
        <taxon>Kluyveromyces</taxon>
    </lineage>
</organism>
<keyword id="KW-0002">3D-structure</keyword>
<keyword id="KW-0119">Carbohydrate metabolism</keyword>
<keyword id="KW-0313">Glucose metabolism</keyword>
<keyword id="KW-0521">NADP</keyword>
<keyword id="KW-0560">Oxidoreductase</keyword>
<keyword id="KW-1185">Reference proteome</keyword>
<name>G6PD_KLULA</name>
<feature type="chain" id="PRO_0000068104" description="Glucose-6-phosphate 1-dehydrogenase">
    <location>
        <begin position="1"/>
        <end position="497"/>
    </location>
</feature>
<feature type="active site" description="Proton acceptor" evidence="1">
    <location>
        <position position="245"/>
    </location>
</feature>
<feature type="binding site" evidence="2">
    <location>
        <begin position="15"/>
        <end position="22"/>
    </location>
    <ligand>
        <name>NADP(+)</name>
        <dbReference type="ChEBI" id="CHEBI:58349"/>
        <label>1</label>
    </ligand>
</feature>
<feature type="binding site" evidence="2">
    <location>
        <position position="49"/>
    </location>
    <ligand>
        <name>NADP(+)</name>
        <dbReference type="ChEBI" id="CHEBI:58349"/>
        <label>1</label>
    </ligand>
</feature>
<feature type="binding site" evidence="2">
    <location>
        <position position="153"/>
    </location>
    <ligand>
        <name>D-glucose 6-phosphate</name>
        <dbReference type="ChEBI" id="CHEBI:61548"/>
    </ligand>
</feature>
<feature type="binding site" evidence="2">
    <location>
        <position position="153"/>
    </location>
    <ligand>
        <name>NADP(+)</name>
        <dbReference type="ChEBI" id="CHEBI:58349"/>
        <label>1</label>
    </ligand>
</feature>
<feature type="binding site" evidence="2">
    <location>
        <begin position="183"/>
        <end position="187"/>
    </location>
    <ligand>
        <name>D-glucose 6-phosphate</name>
        <dbReference type="ChEBI" id="CHEBI:61548"/>
    </ligand>
</feature>
<feature type="binding site" evidence="2">
    <location>
        <position position="221"/>
    </location>
    <ligand>
        <name>D-glucose 6-phosphate</name>
        <dbReference type="ChEBI" id="CHEBI:61548"/>
    </ligand>
</feature>
<feature type="binding site" evidence="2">
    <location>
        <position position="240"/>
    </location>
    <ligand>
        <name>D-glucose 6-phosphate</name>
        <dbReference type="ChEBI" id="CHEBI:61548"/>
    </ligand>
</feature>
<feature type="binding site" evidence="2">
    <location>
        <position position="336"/>
    </location>
    <ligand>
        <name>NADP(+)</name>
        <dbReference type="ChEBI" id="CHEBI:58349"/>
        <label>2</label>
    </ligand>
</feature>
<feature type="binding site" evidence="2">
    <location>
        <position position="339"/>
    </location>
    <ligand>
        <name>D-glucose 6-phosphate</name>
        <dbReference type="ChEBI" id="CHEBI:61548"/>
    </ligand>
</feature>
<feature type="binding site" evidence="2">
    <location>
        <position position="345"/>
    </location>
    <ligand>
        <name>NADP(+)</name>
        <dbReference type="ChEBI" id="CHEBI:58349"/>
        <label>2</label>
    </ligand>
</feature>
<feature type="binding site" evidence="2">
    <location>
        <position position="349"/>
    </location>
    <ligand>
        <name>NADP(+)</name>
        <dbReference type="ChEBI" id="CHEBI:58349"/>
        <label>2</label>
    </ligand>
</feature>
<feature type="binding site" evidence="2">
    <location>
        <position position="371"/>
    </location>
    <ligand>
        <name>NADP(+)</name>
        <dbReference type="ChEBI" id="CHEBI:58349"/>
        <label>2</label>
    </ligand>
</feature>
<feature type="binding site" evidence="2">
    <location>
        <position position="373"/>
    </location>
    <ligand>
        <name>D-glucose 6-phosphate</name>
        <dbReference type="ChEBI" id="CHEBI:61548"/>
    </ligand>
</feature>
<feature type="binding site" evidence="2">
    <location>
        <begin position="379"/>
        <end position="381"/>
    </location>
    <ligand>
        <name>NADP(+)</name>
        <dbReference type="ChEBI" id="CHEBI:58349"/>
        <label>2</label>
    </ligand>
</feature>
<feature type="binding site" evidence="2">
    <location>
        <begin position="399"/>
        <end position="401"/>
    </location>
    <ligand>
        <name>NADP(+)</name>
        <dbReference type="ChEBI" id="CHEBI:58349"/>
        <label>2</label>
    </ligand>
</feature>
<feature type="binding site" evidence="2">
    <location>
        <position position="466"/>
    </location>
    <ligand>
        <name>NADP(+)</name>
        <dbReference type="ChEBI" id="CHEBI:58349"/>
        <label>2</label>
    </ligand>
</feature>
<feature type="strand" evidence="5">
    <location>
        <begin position="10"/>
        <end position="14"/>
    </location>
</feature>
<feature type="turn" evidence="5">
    <location>
        <begin position="15"/>
        <end position="17"/>
    </location>
</feature>
<feature type="helix" evidence="5">
    <location>
        <begin position="19"/>
        <end position="23"/>
    </location>
</feature>
<feature type="helix" evidence="5">
    <location>
        <begin position="25"/>
        <end position="34"/>
    </location>
</feature>
<feature type="strand" evidence="5">
    <location>
        <begin position="43"/>
        <end position="50"/>
    </location>
</feature>
<feature type="helix" evidence="5">
    <location>
        <begin position="54"/>
        <end position="61"/>
    </location>
</feature>
<feature type="helix" evidence="5">
    <location>
        <begin position="62"/>
        <end position="64"/>
    </location>
</feature>
<feature type="turn" evidence="5">
    <location>
        <begin position="68"/>
        <end position="73"/>
    </location>
</feature>
<feature type="helix" evidence="5">
    <location>
        <begin position="74"/>
        <end position="83"/>
    </location>
</feature>
<feature type="strand" evidence="5">
    <location>
        <begin position="84"/>
        <end position="88"/>
    </location>
</feature>
<feature type="strand" evidence="5">
    <location>
        <begin position="91"/>
        <end position="93"/>
    </location>
</feature>
<feature type="helix" evidence="5">
    <location>
        <begin position="94"/>
        <end position="110"/>
    </location>
</feature>
<feature type="strand" evidence="5">
    <location>
        <begin position="117"/>
        <end position="122"/>
    </location>
</feature>
<feature type="helix" evidence="5">
    <location>
        <begin position="126"/>
        <end position="139"/>
    </location>
</feature>
<feature type="strand" evidence="5">
    <location>
        <begin position="145"/>
        <end position="153"/>
    </location>
</feature>
<feature type="helix" evidence="5">
    <location>
        <begin position="159"/>
        <end position="169"/>
    </location>
</feature>
<feature type="turn" evidence="5">
    <location>
        <begin position="170"/>
        <end position="172"/>
    </location>
</feature>
<feature type="turn" evidence="5">
    <location>
        <begin position="175"/>
        <end position="177"/>
    </location>
</feature>
<feature type="strand" evidence="5">
    <location>
        <begin position="178"/>
        <end position="181"/>
    </location>
</feature>
<feature type="helix" evidence="5">
    <location>
        <begin position="183"/>
        <end position="186"/>
    </location>
</feature>
<feature type="helix" evidence="5">
    <location>
        <begin position="188"/>
        <end position="191"/>
    </location>
</feature>
<feature type="helix" evidence="5">
    <location>
        <begin position="193"/>
        <end position="198"/>
    </location>
</feature>
<feature type="helix" evidence="5">
    <location>
        <begin position="201"/>
        <end position="204"/>
    </location>
</feature>
<feature type="turn" evidence="5">
    <location>
        <begin position="209"/>
        <end position="211"/>
    </location>
</feature>
<feature type="strand" evidence="5">
    <location>
        <begin position="212"/>
        <end position="220"/>
    </location>
</feature>
<feature type="helix" evidence="5">
    <location>
        <begin position="229"/>
        <end position="232"/>
    </location>
</feature>
<feature type="turn" evidence="5">
    <location>
        <begin position="233"/>
        <end position="235"/>
    </location>
</feature>
<feature type="helix" evidence="5">
    <location>
        <begin position="236"/>
        <end position="241"/>
    </location>
</feature>
<feature type="turn" evidence="5">
    <location>
        <begin position="242"/>
        <end position="244"/>
    </location>
</feature>
<feature type="helix" evidence="5">
    <location>
        <begin position="245"/>
        <end position="254"/>
    </location>
</feature>
<feature type="strand" evidence="5">
    <location>
        <begin position="259"/>
        <end position="262"/>
    </location>
</feature>
<feature type="helix" evidence="5">
    <location>
        <begin position="263"/>
        <end position="276"/>
    </location>
</feature>
<feature type="strand" evidence="5">
    <location>
        <begin position="284"/>
        <end position="291"/>
    </location>
</feature>
<feature type="strand" evidence="4">
    <location>
        <begin position="296"/>
        <end position="298"/>
    </location>
</feature>
<feature type="strand" evidence="5">
    <location>
        <begin position="315"/>
        <end position="321"/>
    </location>
</feature>
<feature type="turn" evidence="5">
    <location>
        <begin position="326"/>
        <end position="330"/>
    </location>
</feature>
<feature type="strand" evidence="5">
    <location>
        <begin position="333"/>
        <end position="342"/>
    </location>
</feature>
<feature type="strand" evidence="5">
    <location>
        <begin position="345"/>
        <end position="352"/>
    </location>
</feature>
<feature type="strand" evidence="5">
    <location>
        <begin position="356"/>
        <end position="358"/>
    </location>
</feature>
<feature type="helix" evidence="4">
    <location>
        <begin position="359"/>
        <end position="361"/>
    </location>
</feature>
<feature type="strand" evidence="5">
    <location>
        <begin position="367"/>
        <end position="375"/>
    </location>
</feature>
<feature type="strand" evidence="5">
    <location>
        <begin position="377"/>
        <end position="385"/>
    </location>
</feature>
<feature type="strand" evidence="5">
    <location>
        <begin position="387"/>
        <end position="389"/>
    </location>
</feature>
<feature type="strand" evidence="5">
    <location>
        <begin position="393"/>
        <end position="401"/>
    </location>
</feature>
<feature type="helix" evidence="5">
    <location>
        <begin position="403"/>
        <end position="406"/>
    </location>
</feature>
<feature type="helix" evidence="5">
    <location>
        <begin position="414"/>
        <end position="423"/>
    </location>
</feature>
<feature type="helix" evidence="5">
    <location>
        <begin position="427"/>
        <end position="429"/>
    </location>
</feature>
<feature type="helix" evidence="5">
    <location>
        <begin position="433"/>
        <end position="451"/>
    </location>
</feature>
<feature type="strand" evidence="5">
    <location>
        <begin position="459"/>
        <end position="462"/>
    </location>
</feature>
<feature type="strand" evidence="4">
    <location>
        <begin position="465"/>
        <end position="467"/>
    </location>
</feature>
<feature type="helix" evidence="5">
    <location>
        <begin position="471"/>
        <end position="476"/>
    </location>
</feature>
<feature type="turn" evidence="5">
    <location>
        <begin position="477"/>
        <end position="479"/>
    </location>
</feature>
<evidence type="ECO:0000250" key="1">
    <source>
        <dbReference type="UniProtKB" id="P11411"/>
    </source>
</evidence>
<evidence type="ECO:0000250" key="2">
    <source>
        <dbReference type="UniProtKB" id="P11413"/>
    </source>
</evidence>
<evidence type="ECO:0000305" key="3"/>
<evidence type="ECO:0007829" key="4">
    <source>
        <dbReference type="PDB" id="7E6H"/>
    </source>
</evidence>
<evidence type="ECO:0007829" key="5">
    <source>
        <dbReference type="PDB" id="7E6I"/>
    </source>
</evidence>
<gene>
    <name type="primary">ZWF</name>
    <name type="ordered locus">KLLA0D19855g</name>
</gene>
<dbReference type="EC" id="1.1.1.49" evidence="2"/>
<dbReference type="EMBL" id="X70373">
    <property type="protein sequence ID" value="CAA49834.1"/>
    <property type="molecule type" value="Genomic_DNA"/>
</dbReference>
<dbReference type="EMBL" id="CR382124">
    <property type="protein sequence ID" value="CAH01040.1"/>
    <property type="molecule type" value="Genomic_DNA"/>
</dbReference>
<dbReference type="PIR" id="S31337">
    <property type="entry name" value="S31337"/>
</dbReference>
<dbReference type="RefSeq" id="XP_453944.1">
    <property type="nucleotide sequence ID" value="XM_453944.1"/>
</dbReference>
<dbReference type="PDB" id="7E6H">
    <property type="method" value="X-ray"/>
    <property type="resolution" value="2.70 A"/>
    <property type="chains" value="A=1-497"/>
</dbReference>
<dbReference type="PDB" id="7E6I">
    <property type="method" value="X-ray"/>
    <property type="resolution" value="2.39 A"/>
    <property type="chains" value="A=1-497"/>
</dbReference>
<dbReference type="PDBsum" id="7E6H"/>
<dbReference type="PDBsum" id="7E6I"/>
<dbReference type="SMR" id="P48828"/>
<dbReference type="FunCoup" id="P48828">
    <property type="interactions" value="541"/>
</dbReference>
<dbReference type="STRING" id="284590.P48828"/>
<dbReference type="PaxDb" id="284590-P48828"/>
<dbReference type="KEGG" id="kla:KLLA0_D19855g"/>
<dbReference type="eggNOG" id="KOG0563">
    <property type="taxonomic scope" value="Eukaryota"/>
</dbReference>
<dbReference type="HOGENOM" id="CLU_013524_2_3_1"/>
<dbReference type="InParanoid" id="P48828"/>
<dbReference type="OMA" id="ERAGYYE"/>
<dbReference type="UniPathway" id="UPA00115">
    <property type="reaction ID" value="UER00408"/>
</dbReference>
<dbReference type="Proteomes" id="UP000000598">
    <property type="component" value="Chromosome D"/>
</dbReference>
<dbReference type="GO" id="GO:0005829">
    <property type="term" value="C:cytosol"/>
    <property type="evidence" value="ECO:0007669"/>
    <property type="project" value="TreeGrafter"/>
</dbReference>
<dbReference type="GO" id="GO:0004345">
    <property type="term" value="F:glucose-6-phosphate dehydrogenase activity"/>
    <property type="evidence" value="ECO:0007669"/>
    <property type="project" value="UniProtKB-EC"/>
</dbReference>
<dbReference type="GO" id="GO:0050661">
    <property type="term" value="F:NADP binding"/>
    <property type="evidence" value="ECO:0007669"/>
    <property type="project" value="InterPro"/>
</dbReference>
<dbReference type="GO" id="GO:0006006">
    <property type="term" value="P:glucose metabolic process"/>
    <property type="evidence" value="ECO:0007669"/>
    <property type="project" value="UniProtKB-KW"/>
</dbReference>
<dbReference type="GO" id="GO:0009051">
    <property type="term" value="P:pentose-phosphate shunt, oxidative branch"/>
    <property type="evidence" value="ECO:0007669"/>
    <property type="project" value="TreeGrafter"/>
</dbReference>
<dbReference type="FunFam" id="3.30.360.10:FF:000015">
    <property type="entry name" value="Glucose-6-phosphate 1-dehydrogenase"/>
    <property type="match status" value="1"/>
</dbReference>
<dbReference type="FunFam" id="3.40.50.720:FF:000111">
    <property type="entry name" value="Glucose-6-phosphate 1-dehydrogenase"/>
    <property type="match status" value="1"/>
</dbReference>
<dbReference type="Gene3D" id="3.30.360.10">
    <property type="entry name" value="Dihydrodipicolinate Reductase, domain 2"/>
    <property type="match status" value="1"/>
</dbReference>
<dbReference type="Gene3D" id="3.40.50.720">
    <property type="entry name" value="NAD(P)-binding Rossmann-like Domain"/>
    <property type="match status" value="1"/>
</dbReference>
<dbReference type="HAMAP" id="MF_00966">
    <property type="entry name" value="G6PD"/>
    <property type="match status" value="1"/>
</dbReference>
<dbReference type="InterPro" id="IPR001282">
    <property type="entry name" value="G6P_DH"/>
</dbReference>
<dbReference type="InterPro" id="IPR019796">
    <property type="entry name" value="G6P_DH_AS"/>
</dbReference>
<dbReference type="InterPro" id="IPR022675">
    <property type="entry name" value="G6P_DH_C"/>
</dbReference>
<dbReference type="InterPro" id="IPR022674">
    <property type="entry name" value="G6P_DH_NAD-bd"/>
</dbReference>
<dbReference type="InterPro" id="IPR036291">
    <property type="entry name" value="NAD(P)-bd_dom_sf"/>
</dbReference>
<dbReference type="NCBIfam" id="TIGR00871">
    <property type="entry name" value="zwf"/>
    <property type="match status" value="1"/>
</dbReference>
<dbReference type="PANTHER" id="PTHR23429:SF0">
    <property type="entry name" value="GLUCOSE-6-PHOSPHATE 1-DEHYDROGENASE"/>
    <property type="match status" value="1"/>
</dbReference>
<dbReference type="PANTHER" id="PTHR23429">
    <property type="entry name" value="GLUCOSE-6-PHOSPHATE 1-DEHYDROGENASE G6PD"/>
    <property type="match status" value="1"/>
</dbReference>
<dbReference type="Pfam" id="PF02781">
    <property type="entry name" value="G6PD_C"/>
    <property type="match status" value="1"/>
</dbReference>
<dbReference type="Pfam" id="PF00479">
    <property type="entry name" value="G6PD_N"/>
    <property type="match status" value="1"/>
</dbReference>
<dbReference type="PIRSF" id="PIRSF000110">
    <property type="entry name" value="G6PD"/>
    <property type="match status" value="1"/>
</dbReference>
<dbReference type="PRINTS" id="PR00079">
    <property type="entry name" value="G6PDHDRGNASE"/>
</dbReference>
<dbReference type="SUPFAM" id="SSF55347">
    <property type="entry name" value="Glyceraldehyde-3-phosphate dehydrogenase-like, C-terminal domain"/>
    <property type="match status" value="1"/>
</dbReference>
<dbReference type="SUPFAM" id="SSF51735">
    <property type="entry name" value="NAD(P)-binding Rossmann-fold domains"/>
    <property type="match status" value="1"/>
</dbReference>
<dbReference type="PROSITE" id="PS00069">
    <property type="entry name" value="G6P_DEHYDROGENASE"/>
    <property type="match status" value="1"/>
</dbReference>
<accession>P48828</accession>